<keyword id="KW-0966">Cell projection</keyword>
<keyword id="KW-0969">Cilium</keyword>
<keyword id="KW-0970">Cilium biogenesis/degradation</keyword>
<keyword id="KW-0963">Cytoplasm</keyword>
<keyword id="KW-0206">Cytoskeleton</keyword>
<keyword id="KW-0217">Developmental protein</keyword>
<keyword id="KW-0243">Dynein</keyword>
<keyword id="KW-0493">Microtubule</keyword>
<keyword id="KW-0505">Motor protein</keyword>
<keyword id="KW-1185">Reference proteome</keyword>
<accession>Q32KV4</accession>
<gene>
    <name type="primary">DYNC2LI1</name>
</gene>
<proteinExistence type="evidence at transcript level"/>
<dbReference type="EMBL" id="BC109910">
    <property type="protein sequence ID" value="AAI09911.1"/>
    <property type="molecule type" value="mRNA"/>
</dbReference>
<dbReference type="RefSeq" id="NP_001033140.1">
    <property type="nucleotide sequence ID" value="NM_001038051.2"/>
</dbReference>
<dbReference type="SMR" id="Q32KV4"/>
<dbReference type="FunCoup" id="Q32KV4">
    <property type="interactions" value="1199"/>
</dbReference>
<dbReference type="STRING" id="9913.ENSBTAP00000057698"/>
<dbReference type="PaxDb" id="9913-ENSBTAP00000043454"/>
<dbReference type="GeneID" id="507311"/>
<dbReference type="KEGG" id="bta:507311"/>
<dbReference type="CTD" id="51626"/>
<dbReference type="VEuPathDB" id="HostDB:ENSBTAG00000013676"/>
<dbReference type="eggNOG" id="KOG3929">
    <property type="taxonomic scope" value="Eukaryota"/>
</dbReference>
<dbReference type="HOGENOM" id="CLU_049395_0_0_1"/>
<dbReference type="InParanoid" id="Q32KV4"/>
<dbReference type="OMA" id="FWEIAQG"/>
<dbReference type="OrthoDB" id="10263060at2759"/>
<dbReference type="TreeFam" id="TF314138"/>
<dbReference type="Reactome" id="R-BTA-5620924">
    <property type="pathway name" value="Intraflagellar transport"/>
</dbReference>
<dbReference type="Proteomes" id="UP000009136">
    <property type="component" value="Chromosome 11"/>
</dbReference>
<dbReference type="Bgee" id="ENSBTAG00000013676">
    <property type="expression patterns" value="Expressed in oocyte and 106 other cell types or tissues"/>
</dbReference>
<dbReference type="GO" id="GO:0005930">
    <property type="term" value="C:axoneme"/>
    <property type="evidence" value="ECO:0000318"/>
    <property type="project" value="GO_Central"/>
</dbReference>
<dbReference type="GO" id="GO:0005813">
    <property type="term" value="C:centrosome"/>
    <property type="evidence" value="ECO:0000250"/>
    <property type="project" value="UniProtKB"/>
</dbReference>
<dbReference type="GO" id="GO:0036064">
    <property type="term" value="C:ciliary basal body"/>
    <property type="evidence" value="ECO:0000250"/>
    <property type="project" value="UniProtKB"/>
</dbReference>
<dbReference type="GO" id="GO:0035869">
    <property type="term" value="C:ciliary transition zone"/>
    <property type="evidence" value="ECO:0000250"/>
    <property type="project" value="UniProtKB"/>
</dbReference>
<dbReference type="GO" id="GO:0005737">
    <property type="term" value="C:cytoplasm"/>
    <property type="evidence" value="ECO:0000250"/>
    <property type="project" value="UniProtKB"/>
</dbReference>
<dbReference type="GO" id="GO:0005868">
    <property type="term" value="C:cytoplasmic dynein complex"/>
    <property type="evidence" value="ECO:0000318"/>
    <property type="project" value="GO_Central"/>
</dbReference>
<dbReference type="GO" id="GO:0005874">
    <property type="term" value="C:microtubule"/>
    <property type="evidence" value="ECO:0007669"/>
    <property type="project" value="UniProtKB-KW"/>
</dbReference>
<dbReference type="GO" id="GO:0045504">
    <property type="term" value="F:dynein heavy chain binding"/>
    <property type="evidence" value="ECO:0000250"/>
    <property type="project" value="UniProtKB"/>
</dbReference>
<dbReference type="GO" id="GO:0035721">
    <property type="term" value="P:intraciliary retrograde transport"/>
    <property type="evidence" value="ECO:0000318"/>
    <property type="project" value="GO_Central"/>
</dbReference>
<dbReference type="GO" id="GO:0035735">
    <property type="term" value="P:intraciliary transport involved in cilium assembly"/>
    <property type="evidence" value="ECO:0000250"/>
    <property type="project" value="UniProtKB"/>
</dbReference>
<dbReference type="GO" id="GO:1902017">
    <property type="term" value="P:regulation of cilium assembly"/>
    <property type="evidence" value="ECO:0000250"/>
    <property type="project" value="UniProtKB"/>
</dbReference>
<dbReference type="InterPro" id="IPR040045">
    <property type="entry name" value="DYNC2LI1"/>
</dbReference>
<dbReference type="InterPro" id="IPR022780">
    <property type="entry name" value="Dynein_light_int_chain"/>
</dbReference>
<dbReference type="InterPro" id="IPR027417">
    <property type="entry name" value="P-loop_NTPase"/>
</dbReference>
<dbReference type="PANTHER" id="PTHR13236:SF0">
    <property type="entry name" value="CYTOPLASMIC DYNEIN 2 LIGHT INTERMEDIATE CHAIN 1"/>
    <property type="match status" value="1"/>
</dbReference>
<dbReference type="PANTHER" id="PTHR13236">
    <property type="entry name" value="DYNEIN 2 LIGHT INTERMEDIATE CHAIN, ISOFORM 2"/>
    <property type="match status" value="1"/>
</dbReference>
<dbReference type="Pfam" id="PF05783">
    <property type="entry name" value="DLIC"/>
    <property type="match status" value="1"/>
</dbReference>
<dbReference type="SUPFAM" id="SSF52540">
    <property type="entry name" value="P-loop containing nucleoside triphosphate hydrolases"/>
    <property type="match status" value="1"/>
</dbReference>
<organism>
    <name type="scientific">Bos taurus</name>
    <name type="common">Bovine</name>
    <dbReference type="NCBI Taxonomy" id="9913"/>
    <lineage>
        <taxon>Eukaryota</taxon>
        <taxon>Metazoa</taxon>
        <taxon>Chordata</taxon>
        <taxon>Craniata</taxon>
        <taxon>Vertebrata</taxon>
        <taxon>Euteleostomi</taxon>
        <taxon>Mammalia</taxon>
        <taxon>Eutheria</taxon>
        <taxon>Laurasiatheria</taxon>
        <taxon>Artiodactyla</taxon>
        <taxon>Ruminantia</taxon>
        <taxon>Pecora</taxon>
        <taxon>Bovidae</taxon>
        <taxon>Bovinae</taxon>
        <taxon>Bos</taxon>
    </lineage>
</organism>
<reference key="1">
    <citation type="submission" date="2005-11" db="EMBL/GenBank/DDBJ databases">
        <authorList>
            <consortium name="NIH - Mammalian Gene Collection (MGC) project"/>
        </authorList>
    </citation>
    <scope>NUCLEOTIDE SEQUENCE [LARGE SCALE MRNA]</scope>
    <source>
        <strain>Crossbred X Angus</strain>
        <tissue>Liver</tissue>
    </source>
</reference>
<comment type="function">
    <text evidence="2">Acts as one of several non-catalytic accessory components of the cytoplasmic dynein 2 complex (dynein-2 complex), a motor protein complex that drives the movement of cargos along microtubules within cilia and flagella in concert with the intraflagellar transport (IFT) system, facilitating the assembly of these organelles. Involved in the regulation of ciliary length.</text>
</comment>
<comment type="subunit">
    <text evidence="2">Light intermediate chain of the cytoplasmic dynein complex 2, a multisubunit complex composed at least of eleven different proteins. The cytoplasmic dynein 2 complex consists of two catalytic heavy chains (HCs) and a number of non-catalytic subunits presented by intermediate chains (ICs), light intermediate chains (LICs) and light chains (LCs). Among them, a heavy chain (DYNC2H1), two intermediate chains (DYNC2I2 and DYNC2I1), a light intermediate chain (DYNC2LI1), and a light chain (DYNLT2B) are unique to the dynein-2 complex, but a subset of light chains are also shared by dynein-1 and dynein-2 complexes. Dynein-2 complex is built around two copies of cytoplasmic dynein 2 heavy chain 1 (DYNC2H1). The C-terminal region forms the motor domain, which converts the energy from ATP hydrolysis into movement. Its N-terminal region forms the tail, an extended structure that binds the other subunits and holds the two heavy chains in a homodimer. Interacts with DYNC2H1 (via N-terminus); this interaction stabilizes the dynein-2 complex structure.</text>
</comment>
<comment type="subcellular location">
    <subcellularLocation>
        <location evidence="2">Cytoplasm</location>
    </subcellularLocation>
    <subcellularLocation>
        <location evidence="2">Cell projection</location>
        <location evidence="2">Cilium</location>
    </subcellularLocation>
    <subcellularLocation>
        <location evidence="2">Cytoplasm</location>
        <location evidence="2">Cytoskeleton</location>
        <location evidence="2">Cilium basal body</location>
    </subcellularLocation>
    <subcellularLocation>
        <location evidence="1">Cytoplasm</location>
        <location evidence="1">Cytoskeleton</location>
        <location evidence="1">Cilium axoneme</location>
    </subcellularLocation>
    <subcellularLocation>
        <location evidence="2">Cytoplasm</location>
        <location evidence="2">Cytoskeleton</location>
        <location evidence="2">Microtubule organizing center</location>
        <location evidence="2">Centrosome</location>
    </subcellularLocation>
    <text evidence="1">Localizes to the apical cytoplasm.</text>
</comment>
<comment type="similarity">
    <text evidence="4">Belongs to the dynein light intermediate chain family.</text>
</comment>
<feature type="chain" id="PRO_0000318749" description="Cytoplasmic dynein 2 light intermediate chain 1">
    <location>
        <begin position="1"/>
        <end position="351"/>
    </location>
</feature>
<feature type="region of interest" description="Disordered" evidence="3">
    <location>
        <begin position="304"/>
        <end position="351"/>
    </location>
</feature>
<feature type="compositionally biased region" description="Basic and acidic residues" evidence="3">
    <location>
        <begin position="323"/>
        <end position="337"/>
    </location>
</feature>
<evidence type="ECO:0000250" key="1">
    <source>
        <dbReference type="UniProtKB" id="Q8K0T2"/>
    </source>
</evidence>
<evidence type="ECO:0000250" key="2">
    <source>
        <dbReference type="UniProtKB" id="Q8TCX1"/>
    </source>
</evidence>
<evidence type="ECO:0000256" key="3">
    <source>
        <dbReference type="SAM" id="MobiDB-lite"/>
    </source>
</evidence>
<evidence type="ECO:0000305" key="4"/>
<name>DC2L1_BOVIN</name>
<protein>
    <recommendedName>
        <fullName>Cytoplasmic dynein 2 light intermediate chain 1</fullName>
    </recommendedName>
</protein>
<sequence length="351" mass="39712">MPSETLWEIAKAEVEKRGSSENEGDGAEIGEKSVFFIGSKNGGKTTIILRCLDRDEPPKPTLALEYTYGRRTKGHNIPKDIAHFWELGGGTSLLDLISIPITSDTLRTFSIVLVLDLSKPNDLWPTMENLLQATKLNIDKVIMKLGKKNSKAASEMRQKMWSNMQKDHPDRELLDPFPIPLVIIGSKYDIFQDFDSEKRKVICKTLRFVAHYYGASLMFTSKSEALLLKIRGVINQLAFGINKSKSICVDQNKPLFITAGLDSLSQIGPPPLPDNDIGKLHARSPMDLWKKVYEKLFPPKSINTLKDVKDPAKDPQYAESEVDEMRIQKDQELEQYKRSSSKSWKQIELDS</sequence>